<accession>O34389</accession>
<dbReference type="EC" id="1.1.1.38" evidence="3"/>
<dbReference type="EMBL" id="AF008220">
    <property type="protein sequence ID" value="AAC00287.1"/>
    <property type="molecule type" value="Genomic_DNA"/>
</dbReference>
<dbReference type="EMBL" id="AL009126">
    <property type="protein sequence ID" value="CAB14966.1"/>
    <property type="molecule type" value="Genomic_DNA"/>
</dbReference>
<dbReference type="PIR" id="D69655">
    <property type="entry name" value="D69655"/>
</dbReference>
<dbReference type="RefSeq" id="WP_003229258.1">
    <property type="nucleotide sequence ID" value="NZ_OZ025638.1"/>
</dbReference>
<dbReference type="SMR" id="O34389"/>
<dbReference type="FunCoup" id="O34389">
    <property type="interactions" value="552"/>
</dbReference>
<dbReference type="IntAct" id="O34389">
    <property type="interactions" value="1"/>
</dbReference>
<dbReference type="STRING" id="224308.BSU29880"/>
<dbReference type="PaxDb" id="224308-BSU29880"/>
<dbReference type="EnsemblBacteria" id="CAB14966">
    <property type="protein sequence ID" value="CAB14966"/>
    <property type="gene ID" value="BSU_29880"/>
</dbReference>
<dbReference type="GeneID" id="938071"/>
<dbReference type="KEGG" id="bsu:BSU29880"/>
<dbReference type="PATRIC" id="fig|224308.179.peg.3246"/>
<dbReference type="eggNOG" id="COG0281">
    <property type="taxonomic scope" value="Bacteria"/>
</dbReference>
<dbReference type="InParanoid" id="O34389"/>
<dbReference type="OrthoDB" id="3314528at2"/>
<dbReference type="PhylomeDB" id="O34389"/>
<dbReference type="BioCyc" id="BSUB:BSU29880-MONOMER"/>
<dbReference type="Proteomes" id="UP000001570">
    <property type="component" value="Chromosome"/>
</dbReference>
<dbReference type="GO" id="GO:0004471">
    <property type="term" value="F:malate dehydrogenase (decarboxylating) (NAD+) activity"/>
    <property type="evidence" value="ECO:0007669"/>
    <property type="project" value="RHEA"/>
</dbReference>
<dbReference type="GO" id="GO:0004470">
    <property type="term" value="F:malic enzyme activity"/>
    <property type="evidence" value="ECO:0000318"/>
    <property type="project" value="GO_Central"/>
</dbReference>
<dbReference type="GO" id="GO:0046872">
    <property type="term" value="F:metal ion binding"/>
    <property type="evidence" value="ECO:0007669"/>
    <property type="project" value="UniProtKB-KW"/>
</dbReference>
<dbReference type="GO" id="GO:0051287">
    <property type="term" value="F:NAD binding"/>
    <property type="evidence" value="ECO:0007669"/>
    <property type="project" value="InterPro"/>
</dbReference>
<dbReference type="GO" id="GO:0008948">
    <property type="term" value="F:oxaloacetate decarboxylase activity"/>
    <property type="evidence" value="ECO:0007669"/>
    <property type="project" value="RHEA"/>
</dbReference>
<dbReference type="GO" id="GO:0006108">
    <property type="term" value="P:malate metabolic process"/>
    <property type="evidence" value="ECO:0000318"/>
    <property type="project" value="GO_Central"/>
</dbReference>
<dbReference type="GO" id="GO:0006090">
    <property type="term" value="P:pyruvate metabolic process"/>
    <property type="evidence" value="ECO:0000318"/>
    <property type="project" value="GO_Central"/>
</dbReference>
<dbReference type="CDD" id="cd05312">
    <property type="entry name" value="NAD_bind_1_malic_enz"/>
    <property type="match status" value="1"/>
</dbReference>
<dbReference type="FunFam" id="3.40.50.10380:FF:000001">
    <property type="entry name" value="NAD-dependent malic enzyme"/>
    <property type="match status" value="1"/>
</dbReference>
<dbReference type="FunFam" id="3.40.50.720:FF:000055">
    <property type="entry name" value="NAD-dependent malic enzyme"/>
    <property type="match status" value="1"/>
</dbReference>
<dbReference type="Gene3D" id="3.40.50.10380">
    <property type="entry name" value="Malic enzyme, N-terminal domain"/>
    <property type="match status" value="1"/>
</dbReference>
<dbReference type="Gene3D" id="3.40.50.720">
    <property type="entry name" value="NAD(P)-binding Rossmann-like Domain"/>
    <property type="match status" value="1"/>
</dbReference>
<dbReference type="InterPro" id="IPR046346">
    <property type="entry name" value="Aminoacid_DH-like_N_sf"/>
</dbReference>
<dbReference type="InterPro" id="IPR015884">
    <property type="entry name" value="Malic_enzyme_CS"/>
</dbReference>
<dbReference type="InterPro" id="IPR012301">
    <property type="entry name" value="Malic_N_dom"/>
</dbReference>
<dbReference type="InterPro" id="IPR037062">
    <property type="entry name" value="Malic_N_dom_sf"/>
</dbReference>
<dbReference type="InterPro" id="IPR012302">
    <property type="entry name" value="Malic_NAD-bd"/>
</dbReference>
<dbReference type="InterPro" id="IPR001891">
    <property type="entry name" value="Malic_OxRdtase"/>
</dbReference>
<dbReference type="InterPro" id="IPR036291">
    <property type="entry name" value="NAD(P)-bd_dom_sf"/>
</dbReference>
<dbReference type="NCBIfam" id="NF010052">
    <property type="entry name" value="PRK13529.1"/>
    <property type="match status" value="1"/>
</dbReference>
<dbReference type="PANTHER" id="PTHR23406">
    <property type="entry name" value="MALIC ENZYME-RELATED"/>
    <property type="match status" value="1"/>
</dbReference>
<dbReference type="PANTHER" id="PTHR23406:SF34">
    <property type="entry name" value="NAD-DEPENDENT MALIC ENZYME, MITOCHONDRIAL"/>
    <property type="match status" value="1"/>
</dbReference>
<dbReference type="Pfam" id="PF00390">
    <property type="entry name" value="malic"/>
    <property type="match status" value="1"/>
</dbReference>
<dbReference type="Pfam" id="PF03949">
    <property type="entry name" value="Malic_M"/>
    <property type="match status" value="1"/>
</dbReference>
<dbReference type="PIRSF" id="PIRSF000106">
    <property type="entry name" value="ME"/>
    <property type="match status" value="1"/>
</dbReference>
<dbReference type="PRINTS" id="PR00072">
    <property type="entry name" value="MALOXRDTASE"/>
</dbReference>
<dbReference type="SMART" id="SM01274">
    <property type="entry name" value="malic"/>
    <property type="match status" value="1"/>
</dbReference>
<dbReference type="SMART" id="SM00919">
    <property type="entry name" value="Malic_M"/>
    <property type="match status" value="1"/>
</dbReference>
<dbReference type="SUPFAM" id="SSF53223">
    <property type="entry name" value="Aminoacid dehydrogenase-like, N-terminal domain"/>
    <property type="match status" value="1"/>
</dbReference>
<dbReference type="SUPFAM" id="SSF51735">
    <property type="entry name" value="NAD(P)-binding Rossmann-fold domains"/>
    <property type="match status" value="1"/>
</dbReference>
<dbReference type="PROSITE" id="PS00331">
    <property type="entry name" value="MALIC_ENZYMES"/>
    <property type="match status" value="1"/>
</dbReference>
<name>MAO3_BACSU</name>
<evidence type="ECO:0000250" key="1">
    <source>
        <dbReference type="UniProtKB" id="P40927"/>
    </source>
</evidence>
<evidence type="ECO:0000250" key="2">
    <source>
        <dbReference type="UniProtKB" id="P76558"/>
    </source>
</evidence>
<evidence type="ECO:0000269" key="3">
    <source>
    </source>
</evidence>
<evidence type="ECO:0000269" key="4">
    <source>
    </source>
</evidence>
<evidence type="ECO:0000269" key="5">
    <source>
    </source>
</evidence>
<evidence type="ECO:0000305" key="6"/>
<proteinExistence type="evidence at protein level"/>
<sequence length="566" mass="62149">MKQFRVTNEGDIQTTLRGLEVLSVPFLNKGVAFTEEERKELGLKGFLPPKVLTIDDQAKRAYEQYSAQPDDLSKNVYLTALHDRNETLFYRLLNDHLGEMLPIVYTPTVGTAIQRYSHEYRKPRGLYLSIDDPDGMKEAFKQYKDQSDTIDLIVATDAEGILGIGDWGVGGIAISIGKLAVYTAAAGIDPSRVLAVVLDAGTNQESLLNDPLYVGNQHSRVRGERYDQFIDDYVALARETFPNALLHWEDFGAKNARSILKRYKDKVCTFNDDIQGTGAVSLAAVLSCAKASKVPLRDHRVVIFGAGTAGIGIAEQLREALVREGLSEEESYKRFWCIDRNGLLTDDMDQLLDFQKPYARSADEVKDYQRNGDGGGIDLLEVVRQAKPTILIGTSTVSGAFTEEIVKEMASHVKRPAILPMSNPTTLSEAKPEDLIEWTEGRALITTGSPFPPVEYNGVTYHIGQANNALVFPGLGLGTIVTKSKLITDGMFEACARAIAGMVNVGVPGAPMLPKVEDLRTVSATVAVEVAKTAMKEGVATEEPEDIIQAVQDAMWYPVYKPIRAI</sequence>
<protein>
    <recommendedName>
        <fullName evidence="6">NAD-dependent malic enzyme 3</fullName>
        <shortName>NAD-ME 3</shortName>
        <ecNumber evidence="3">1.1.1.38</ecNumber>
    </recommendedName>
    <alternativeName>
        <fullName evidence="6">Malate dehydrogenase MalS</fullName>
    </alternativeName>
</protein>
<reference key="1">
    <citation type="journal article" date="1997" name="Microbiology">
        <title>Sequencing and functional annotation of the Bacillus subtilis genes in the 200 kb rrnB-dnaB region.</title>
        <authorList>
            <person name="Lapidus A."/>
            <person name="Galleron N."/>
            <person name="Sorokin A."/>
            <person name="Ehrlich S.D."/>
        </authorList>
    </citation>
    <scope>NUCLEOTIDE SEQUENCE [GENOMIC DNA]</scope>
</reference>
<reference key="2">
    <citation type="journal article" date="1997" name="Nature">
        <title>The complete genome sequence of the Gram-positive bacterium Bacillus subtilis.</title>
        <authorList>
            <person name="Kunst F."/>
            <person name="Ogasawara N."/>
            <person name="Moszer I."/>
            <person name="Albertini A.M."/>
            <person name="Alloni G."/>
            <person name="Azevedo V."/>
            <person name="Bertero M.G."/>
            <person name="Bessieres P."/>
            <person name="Bolotin A."/>
            <person name="Borchert S."/>
            <person name="Borriss R."/>
            <person name="Boursier L."/>
            <person name="Brans A."/>
            <person name="Braun M."/>
            <person name="Brignell S.C."/>
            <person name="Bron S."/>
            <person name="Brouillet S."/>
            <person name="Bruschi C.V."/>
            <person name="Caldwell B."/>
            <person name="Capuano V."/>
            <person name="Carter N.M."/>
            <person name="Choi S.-K."/>
            <person name="Codani J.-J."/>
            <person name="Connerton I.F."/>
            <person name="Cummings N.J."/>
            <person name="Daniel R.A."/>
            <person name="Denizot F."/>
            <person name="Devine K.M."/>
            <person name="Duesterhoeft A."/>
            <person name="Ehrlich S.D."/>
            <person name="Emmerson P.T."/>
            <person name="Entian K.-D."/>
            <person name="Errington J."/>
            <person name="Fabret C."/>
            <person name="Ferrari E."/>
            <person name="Foulger D."/>
            <person name="Fritz C."/>
            <person name="Fujita M."/>
            <person name="Fujita Y."/>
            <person name="Fuma S."/>
            <person name="Galizzi A."/>
            <person name="Galleron N."/>
            <person name="Ghim S.-Y."/>
            <person name="Glaser P."/>
            <person name="Goffeau A."/>
            <person name="Golightly E.J."/>
            <person name="Grandi G."/>
            <person name="Guiseppi G."/>
            <person name="Guy B.J."/>
            <person name="Haga K."/>
            <person name="Haiech J."/>
            <person name="Harwood C.R."/>
            <person name="Henaut A."/>
            <person name="Hilbert H."/>
            <person name="Holsappel S."/>
            <person name="Hosono S."/>
            <person name="Hullo M.-F."/>
            <person name="Itaya M."/>
            <person name="Jones L.-M."/>
            <person name="Joris B."/>
            <person name="Karamata D."/>
            <person name="Kasahara Y."/>
            <person name="Klaerr-Blanchard M."/>
            <person name="Klein C."/>
            <person name="Kobayashi Y."/>
            <person name="Koetter P."/>
            <person name="Koningstein G."/>
            <person name="Krogh S."/>
            <person name="Kumano M."/>
            <person name="Kurita K."/>
            <person name="Lapidus A."/>
            <person name="Lardinois S."/>
            <person name="Lauber J."/>
            <person name="Lazarevic V."/>
            <person name="Lee S.-M."/>
            <person name="Levine A."/>
            <person name="Liu H."/>
            <person name="Masuda S."/>
            <person name="Mauel C."/>
            <person name="Medigue C."/>
            <person name="Medina N."/>
            <person name="Mellado R.P."/>
            <person name="Mizuno M."/>
            <person name="Moestl D."/>
            <person name="Nakai S."/>
            <person name="Noback M."/>
            <person name="Noone D."/>
            <person name="O'Reilly M."/>
            <person name="Ogawa K."/>
            <person name="Ogiwara A."/>
            <person name="Oudega B."/>
            <person name="Park S.-H."/>
            <person name="Parro V."/>
            <person name="Pohl T.M."/>
            <person name="Portetelle D."/>
            <person name="Porwollik S."/>
            <person name="Prescott A.M."/>
            <person name="Presecan E."/>
            <person name="Pujic P."/>
            <person name="Purnelle B."/>
            <person name="Rapoport G."/>
            <person name="Rey M."/>
            <person name="Reynolds S."/>
            <person name="Rieger M."/>
            <person name="Rivolta C."/>
            <person name="Rocha E."/>
            <person name="Roche B."/>
            <person name="Rose M."/>
            <person name="Sadaie Y."/>
            <person name="Sato T."/>
            <person name="Scanlan E."/>
            <person name="Schleich S."/>
            <person name="Schroeter R."/>
            <person name="Scoffone F."/>
            <person name="Sekiguchi J."/>
            <person name="Sekowska A."/>
            <person name="Seror S.J."/>
            <person name="Serror P."/>
            <person name="Shin B.-S."/>
            <person name="Soldo B."/>
            <person name="Sorokin A."/>
            <person name="Tacconi E."/>
            <person name="Takagi T."/>
            <person name="Takahashi H."/>
            <person name="Takemaru K."/>
            <person name="Takeuchi M."/>
            <person name="Tamakoshi A."/>
            <person name="Tanaka T."/>
            <person name="Terpstra P."/>
            <person name="Tognoni A."/>
            <person name="Tosato V."/>
            <person name="Uchiyama S."/>
            <person name="Vandenbol M."/>
            <person name="Vannier F."/>
            <person name="Vassarotti A."/>
            <person name="Viari A."/>
            <person name="Wambutt R."/>
            <person name="Wedler E."/>
            <person name="Wedler H."/>
            <person name="Weitzenegger T."/>
            <person name="Winters P."/>
            <person name="Wipat A."/>
            <person name="Yamamoto H."/>
            <person name="Yamane K."/>
            <person name="Yasumoto K."/>
            <person name="Yata K."/>
            <person name="Yoshida K."/>
            <person name="Yoshikawa H.-F."/>
            <person name="Zumstein E."/>
            <person name="Yoshikawa H."/>
            <person name="Danchin A."/>
        </authorList>
    </citation>
    <scope>NUCLEOTIDE SEQUENCE [LARGE SCALE GENOMIC DNA]</scope>
    <source>
        <strain>168</strain>
    </source>
</reference>
<reference key="3">
    <citation type="journal article" date="2006" name="J. Bacteriol.">
        <title>YtsJ has the major physiological role of the four paralogous malic enzyme isoforms in Bacillus subtilis.</title>
        <authorList>
            <person name="Lerondel G."/>
            <person name="Doan T."/>
            <person name="Zamboni N."/>
            <person name="Sauer U."/>
            <person name="Aymerich S."/>
        </authorList>
    </citation>
    <scope>FUNCTION</scope>
    <scope>CATALYTIC ACTIVITY</scope>
    <scope>BIOPHYSICOCHEMICAL PROPERTIES</scope>
    <scope>INDUCTION</scope>
    <scope>DISRUPTION PHENOTYPE</scope>
    <source>
        <strain>168</strain>
    </source>
</reference>
<reference key="4">
    <citation type="journal article" date="2013" name="FEMS Microbiol. Lett.">
        <title>Malate metabolism in Bacillus subtilis: distinct roles for three classes of malate-oxidizing enzymes.</title>
        <authorList>
            <person name="Meyer F.M."/>
            <person name="Stuelke J."/>
        </authorList>
    </citation>
    <scope>FUNCTION</scope>
    <scope>DISRUPTION PHENOTYPE</scope>
    <source>
        <strain>168</strain>
    </source>
</reference>
<reference key="5">
    <citation type="journal article" date="2021" name="MBio">
        <title>Bifunctional malic/malolactic enzyme provides a novel mechanism for NADPH-balancing in Bacillus subtilis.</title>
        <authorList>
            <person name="Hoerl M."/>
            <person name="Fuhrer T."/>
            <person name="Zamboni N."/>
        </authorList>
    </citation>
    <scope>DISRUPTION PHENOTYPE</scope>
</reference>
<keyword id="KW-0460">Magnesium</keyword>
<keyword id="KW-0464">Manganese</keyword>
<keyword id="KW-0479">Metal-binding</keyword>
<keyword id="KW-0520">NAD</keyword>
<keyword id="KW-0560">Oxidoreductase</keyword>
<keyword id="KW-1185">Reference proteome</keyword>
<organism>
    <name type="scientific">Bacillus subtilis (strain 168)</name>
    <dbReference type="NCBI Taxonomy" id="224308"/>
    <lineage>
        <taxon>Bacteria</taxon>
        <taxon>Bacillati</taxon>
        <taxon>Bacillota</taxon>
        <taxon>Bacilli</taxon>
        <taxon>Bacillales</taxon>
        <taxon>Bacillaceae</taxon>
        <taxon>Bacillus</taxon>
    </lineage>
</organism>
<feature type="chain" id="PRO_0000160210" description="NAD-dependent malic enzyme 3">
    <location>
        <begin position="1"/>
        <end position="566"/>
    </location>
</feature>
<feature type="active site" description="Proton donor" evidence="1">
    <location>
        <position position="105"/>
    </location>
</feature>
<feature type="active site" description="Proton acceptor" evidence="1">
    <location>
        <position position="178"/>
    </location>
</feature>
<feature type="binding site" evidence="1">
    <location>
        <position position="249"/>
    </location>
    <ligand>
        <name>a divalent metal cation</name>
        <dbReference type="ChEBI" id="CHEBI:60240"/>
    </ligand>
</feature>
<feature type="binding site" evidence="1">
    <location>
        <position position="250"/>
    </location>
    <ligand>
        <name>a divalent metal cation</name>
        <dbReference type="ChEBI" id="CHEBI:60240"/>
    </ligand>
</feature>
<feature type="binding site" evidence="1">
    <location>
        <position position="273"/>
    </location>
    <ligand>
        <name>a divalent metal cation</name>
        <dbReference type="ChEBI" id="CHEBI:60240"/>
    </ligand>
</feature>
<feature type="binding site" evidence="1">
    <location>
        <begin position="306"/>
        <end position="309"/>
    </location>
    <ligand>
        <name>NAD(+)</name>
        <dbReference type="ChEBI" id="CHEBI:57540"/>
    </ligand>
</feature>
<feature type="binding site" evidence="1">
    <location>
        <position position="423"/>
    </location>
    <ligand>
        <name>NAD(+)</name>
        <dbReference type="ChEBI" id="CHEBI:57540"/>
    </ligand>
</feature>
<feature type="binding site" evidence="1">
    <location>
        <position position="468"/>
    </location>
    <ligand>
        <name>NAD(+)</name>
        <dbReference type="ChEBI" id="CHEBI:57540"/>
    </ligand>
</feature>
<comment type="function">
    <text evidence="3 4">Catalyzes the decarboxylation of malate to pyruvate. Can use NAD and NADP, but with a strong preference for NAD. Can also catalyze the decarboxylation of oxaloacetate (PubMed:16788182). Involved in keeping the ATP levels high (PubMed:23136871).</text>
</comment>
<comment type="catalytic activity">
    <reaction evidence="3">
        <text>(S)-malate + NAD(+) = pyruvate + CO2 + NADH</text>
        <dbReference type="Rhea" id="RHEA:12653"/>
        <dbReference type="ChEBI" id="CHEBI:15361"/>
        <dbReference type="ChEBI" id="CHEBI:15589"/>
        <dbReference type="ChEBI" id="CHEBI:16526"/>
        <dbReference type="ChEBI" id="CHEBI:57540"/>
        <dbReference type="ChEBI" id="CHEBI:57945"/>
        <dbReference type="EC" id="1.1.1.38"/>
    </reaction>
</comment>
<comment type="catalytic activity">
    <reaction evidence="3">
        <text>oxaloacetate + H(+) = pyruvate + CO2</text>
        <dbReference type="Rhea" id="RHEA:15641"/>
        <dbReference type="ChEBI" id="CHEBI:15361"/>
        <dbReference type="ChEBI" id="CHEBI:15378"/>
        <dbReference type="ChEBI" id="CHEBI:16452"/>
        <dbReference type="ChEBI" id="CHEBI:16526"/>
        <dbReference type="EC" id="1.1.1.38"/>
    </reaction>
</comment>
<comment type="cofactor">
    <cofactor evidence="2">
        <name>Mg(2+)</name>
        <dbReference type="ChEBI" id="CHEBI:18420"/>
    </cofactor>
    <cofactor evidence="2">
        <name>Mn(2+)</name>
        <dbReference type="ChEBI" id="CHEBI:29035"/>
    </cofactor>
    <text evidence="2">Divalent metal cations.</text>
</comment>
<comment type="biophysicochemical properties">
    <kinetics>
        <KM evidence="3">3.52 mM for malate</KM>
        <KM evidence="3">5.5 mM for NAD</KM>
        <KM evidence="3">7.3 mM for NADP</KM>
    </kinetics>
</comment>
<comment type="induction">
    <text evidence="3">Weakly expressed in glucose or malate minimal medium.</text>
</comment>
<comment type="disruption phenotype">
    <text evidence="3 4 5">Mutant can use either a gluconeogenic carbon source or glucose as efficiently as the wild-type strain (PubMed:16788182). The ATP concentrations in the mutant grown in minimal medium with glucose are similar to the wild-type level. ATP concentrations decrease by about 10% in malate minimal medium. The mleA-maeA-malS triple mutant shows a decrease in ATP concentrations by about 20% and a moderate growth defect (PubMed:23136871). NADPH overproduction is roughly halved in the deletion mutant (PubMed:33824210).</text>
</comment>
<comment type="similarity">
    <text evidence="6">Belongs to the malic enzymes family.</text>
</comment>
<gene>
    <name type="primary">malS</name>
    <name type="ordered locus">BSU29880</name>
</gene>